<accession>Q3MHE8</accession>
<reference key="1">
    <citation type="submission" date="2005-09" db="EMBL/GenBank/DDBJ databases">
        <authorList>
            <consortium name="NIH - Mammalian Gene Collection (MGC) project"/>
        </authorList>
    </citation>
    <scope>NUCLEOTIDE SEQUENCE [LARGE SCALE MRNA]</scope>
    <source>
        <strain>Hereford</strain>
        <tissue>Uterus</tissue>
    </source>
</reference>
<protein>
    <recommendedName>
        <fullName>Signal recognition particle receptor subunit alpha</fullName>
        <shortName>SR-alpha</shortName>
    </recommendedName>
    <alternativeName>
        <fullName>Docking protein alpha</fullName>
        <shortName>DP-alpha</shortName>
    </alternativeName>
</protein>
<keyword id="KW-0256">Endoplasmic reticulum</keyword>
<keyword id="KW-0342">GTP-binding</keyword>
<keyword id="KW-0472">Membrane</keyword>
<keyword id="KW-0547">Nucleotide-binding</keyword>
<keyword id="KW-0597">Phosphoprotein</keyword>
<keyword id="KW-0675">Receptor</keyword>
<keyword id="KW-1185">Reference proteome</keyword>
<organism>
    <name type="scientific">Bos taurus</name>
    <name type="common">Bovine</name>
    <dbReference type="NCBI Taxonomy" id="9913"/>
    <lineage>
        <taxon>Eukaryota</taxon>
        <taxon>Metazoa</taxon>
        <taxon>Chordata</taxon>
        <taxon>Craniata</taxon>
        <taxon>Vertebrata</taxon>
        <taxon>Euteleostomi</taxon>
        <taxon>Mammalia</taxon>
        <taxon>Eutheria</taxon>
        <taxon>Laurasiatheria</taxon>
        <taxon>Artiodactyla</taxon>
        <taxon>Ruminantia</taxon>
        <taxon>Pecora</taxon>
        <taxon>Bovidae</taxon>
        <taxon>Bovinae</taxon>
        <taxon>Bos</taxon>
    </lineage>
</organism>
<evidence type="ECO:0000250" key="1"/>
<evidence type="ECO:0000250" key="2">
    <source>
        <dbReference type="UniProtKB" id="P08240"/>
    </source>
</evidence>
<evidence type="ECO:0000250" key="3">
    <source>
        <dbReference type="UniProtKB" id="P32916"/>
    </source>
</evidence>
<evidence type="ECO:0000256" key="4">
    <source>
        <dbReference type="SAM" id="MobiDB-lite"/>
    </source>
</evidence>
<evidence type="ECO:0000305" key="5"/>
<proteinExistence type="evidence at transcript level"/>
<sequence>MLDFFTIFSKGGLVLWCFQGVSDSCTGPVNALIRSVLLQERGGNNSFTHEALTLKYKLDNQFELVFVVGFQKILTLTYVDKLIDDVHRLFRDKYRTEIQQQSALSLLNGTFDFQNDFLRLLREAEESSKIRAPTTMKKFEDSEKAKKPVRSMIETRGEKPKEKAKNNKKNKGAKKEGSDGPLATSKAAPAEKSGLPVGPENGEELSKEEQIRRKREEFIQKHGRGMEKSSKSSKSDAPKEKGKKAPRVWALGGSANKEVLDYSTPTTNGAPEAAPPEDINLIRGTGPGRQLQDLDCSSSDDEGAAQNSTKPSATKGTLGGMFGMLKGLVGSKSLTREDMESVLDKMRDHLIAKNVAADIAVQLCESVANKLEGKVMGTFSTVTSTVKQALQESLVQILQPQRRVDMLRDIMDAQRHQRPYVVTFCGVNGVGKSTNLAKISFWLLENGFSVLIAACDTFRAGAVEQLRTHTRRLSALHPPEKHGGRTMVQLFEKGYGKDAAGIAMEAIAFARNQGFDVVLVDTAGRMQDNAPLMTALAKLITVNTPDLVLFVGEALVGNEAVDQLVKFNRALADHSMAQTPRLIDGIVLTKFDTIDDKVGAAISMTYITSKPIVFVGTGQTYCDLRSLNAKAVVAALMKA</sequence>
<feature type="chain" id="PRO_0000282927" description="Signal recognition particle receptor subunit alpha">
    <location>
        <begin position="1"/>
        <end position="639"/>
    </location>
</feature>
<feature type="region of interest" description="Disordered" evidence="4">
    <location>
        <begin position="132"/>
        <end position="317"/>
    </location>
</feature>
<feature type="region of interest" description="NG domain" evidence="2">
    <location>
        <begin position="420"/>
        <end position="637"/>
    </location>
</feature>
<feature type="compositionally biased region" description="Basic and acidic residues" evidence="4">
    <location>
        <begin position="137"/>
        <end position="146"/>
    </location>
</feature>
<feature type="compositionally biased region" description="Basic and acidic residues" evidence="4">
    <location>
        <begin position="153"/>
        <end position="165"/>
    </location>
</feature>
<feature type="compositionally biased region" description="Basic and acidic residues" evidence="4">
    <location>
        <begin position="204"/>
        <end position="240"/>
    </location>
</feature>
<feature type="compositionally biased region" description="Polar residues" evidence="4">
    <location>
        <begin position="305"/>
        <end position="315"/>
    </location>
</feature>
<feature type="binding site" evidence="1">
    <location>
        <begin position="426"/>
        <end position="433"/>
    </location>
    <ligand>
        <name>GTP</name>
        <dbReference type="ChEBI" id="CHEBI:37565"/>
    </ligand>
</feature>
<feature type="binding site" evidence="1">
    <location>
        <begin position="521"/>
        <end position="525"/>
    </location>
    <ligand>
        <name>GTP</name>
        <dbReference type="ChEBI" id="CHEBI:37565"/>
    </ligand>
</feature>
<feature type="binding site" evidence="1">
    <location>
        <begin position="589"/>
        <end position="592"/>
    </location>
    <ligand>
        <name>GTP</name>
        <dbReference type="ChEBI" id="CHEBI:37565"/>
    </ligand>
</feature>
<feature type="modified residue" description="Phosphoserine" evidence="2">
    <location>
        <position position="178"/>
    </location>
</feature>
<feature type="modified residue" description="Phosphothreonine" evidence="2">
    <location>
        <position position="285"/>
    </location>
</feature>
<feature type="modified residue" description="Phosphoserine" evidence="2">
    <location>
        <position position="297"/>
    </location>
</feature>
<feature type="modified residue" description="Phosphoserine" evidence="2">
    <location>
        <position position="298"/>
    </location>
</feature>
<feature type="modified residue" description="Phosphoserine" evidence="2">
    <location>
        <position position="299"/>
    </location>
</feature>
<feature type="modified residue" description="Phosphoserine" evidence="2">
    <location>
        <position position="474"/>
    </location>
</feature>
<feature type="modified residue" description="Phosphothreonine" evidence="2">
    <location>
        <position position="579"/>
    </location>
</feature>
<gene>
    <name evidence="2" type="primary">SRPRA</name>
    <name type="synonym">SRPR</name>
</gene>
<name>SRPRA_BOVIN</name>
<comment type="function">
    <text evidence="2">Component of the SRP (signal recognition particle) receptor (By similarity). Ensures, in conjunction with the signal recognition particle, the correct targeting of the nascent secretory proteins to the endoplasmic reticulum membrane system (By similarity). Forms a guanosine 5'-triphosphate (GTP)-dependent complex with the SRP subunit SRP54 (By similarity). SRP receptor compaction and GTPase rearrangement drive SRP-mediated cotranslational protein translocation into the ER (By similarity).</text>
</comment>
<comment type="subunit">
    <text evidence="2">Heterodimer with SRPRB (By similarity). Interacts with the signal recognition particle (SRP) complex subunit SRP54 (By similarity).</text>
</comment>
<comment type="subcellular location">
    <subcellularLocation>
        <location evidence="3">Endoplasmic reticulum membrane</location>
        <topology evidence="3">Peripheral membrane protein</topology>
        <orientation evidence="3">Cytoplasmic side</orientation>
    </subcellularLocation>
    <text evidence="3">Thought to be anchored in the membrane through an interaction with SR-beta, which contains a bona fide transmembrane domain.</text>
</comment>
<comment type="domain">
    <text evidence="2">The NG domain, also named G domain, is a special guanosine triphosphatase (GTPase) domain, which forms a guanosine 5'-triphosphate (GTP)-dependent complex with a homologous NG domain in the signal recognition particle (SRP) complex subunit SRP54 (By similarity). The two NG domains undergo cooperative rearrangements upon their assembly, which culminate in the reciprocal activation of the GTPase activity of one another (By similarity). GTPase induced rearrangement of SR drives SRP-mediated cotranslational protein translocation into the ER (By similarity).</text>
</comment>
<comment type="similarity">
    <text evidence="5">Belongs to the GTP-binding SRP family.</text>
</comment>
<dbReference type="EMBL" id="BC105264">
    <property type="protein sequence ID" value="AAI05265.1"/>
    <property type="molecule type" value="mRNA"/>
</dbReference>
<dbReference type="RefSeq" id="NP_001068590.1">
    <property type="nucleotide sequence ID" value="NM_001075122.1"/>
</dbReference>
<dbReference type="SMR" id="Q3MHE8"/>
<dbReference type="FunCoup" id="Q3MHE8">
    <property type="interactions" value="2942"/>
</dbReference>
<dbReference type="STRING" id="9913.ENSBTAP00000018762"/>
<dbReference type="PaxDb" id="9913-ENSBTAP00000018762"/>
<dbReference type="Ensembl" id="ENSBTAT00000018762.6">
    <property type="protein sequence ID" value="ENSBTAP00000018762.6"/>
    <property type="gene ID" value="ENSBTAG00000014105.7"/>
</dbReference>
<dbReference type="GeneID" id="281504"/>
<dbReference type="KEGG" id="bta:281504"/>
<dbReference type="CTD" id="6734"/>
<dbReference type="VEuPathDB" id="HostDB:ENSBTAG00000014105"/>
<dbReference type="VGNC" id="VGNC:56282">
    <property type="gene designation" value="SRPRA"/>
</dbReference>
<dbReference type="eggNOG" id="KOG0781">
    <property type="taxonomic scope" value="Eukaryota"/>
</dbReference>
<dbReference type="GeneTree" id="ENSGT00550000074936"/>
<dbReference type="HOGENOM" id="CLU_009301_8_0_1"/>
<dbReference type="InParanoid" id="Q3MHE8"/>
<dbReference type="OMA" id="HLGWIDK"/>
<dbReference type="OrthoDB" id="1727884at2759"/>
<dbReference type="Proteomes" id="UP000009136">
    <property type="component" value="Chromosome 29"/>
</dbReference>
<dbReference type="Bgee" id="ENSBTAG00000014105">
    <property type="expression patterns" value="Expressed in saliva-secreting gland and 104 other cell types or tissues"/>
</dbReference>
<dbReference type="GO" id="GO:0005789">
    <property type="term" value="C:endoplasmic reticulum membrane"/>
    <property type="evidence" value="ECO:0000318"/>
    <property type="project" value="GO_Central"/>
</dbReference>
<dbReference type="GO" id="GO:0005785">
    <property type="term" value="C:signal recognition particle receptor complex"/>
    <property type="evidence" value="ECO:0007669"/>
    <property type="project" value="InterPro"/>
</dbReference>
<dbReference type="GO" id="GO:0016887">
    <property type="term" value="F:ATP hydrolysis activity"/>
    <property type="evidence" value="ECO:0007669"/>
    <property type="project" value="InterPro"/>
</dbReference>
<dbReference type="GO" id="GO:0005525">
    <property type="term" value="F:GTP binding"/>
    <property type="evidence" value="ECO:0007669"/>
    <property type="project" value="UniProtKB-KW"/>
</dbReference>
<dbReference type="GO" id="GO:0003924">
    <property type="term" value="F:GTPase activity"/>
    <property type="evidence" value="ECO:0000318"/>
    <property type="project" value="GO_Central"/>
</dbReference>
<dbReference type="GO" id="GO:0005047">
    <property type="term" value="F:signal recognition particle binding"/>
    <property type="evidence" value="ECO:0000318"/>
    <property type="project" value="GO_Central"/>
</dbReference>
<dbReference type="GO" id="GO:0006886">
    <property type="term" value="P:intracellular protein transport"/>
    <property type="evidence" value="ECO:0007669"/>
    <property type="project" value="InterPro"/>
</dbReference>
<dbReference type="GO" id="GO:0045047">
    <property type="term" value="P:protein targeting to ER"/>
    <property type="evidence" value="ECO:0000318"/>
    <property type="project" value="GO_Central"/>
</dbReference>
<dbReference type="GO" id="GO:0006614">
    <property type="term" value="P:SRP-dependent cotranslational protein targeting to membrane"/>
    <property type="evidence" value="ECO:0007669"/>
    <property type="project" value="InterPro"/>
</dbReference>
<dbReference type="CDD" id="cd14826">
    <property type="entry name" value="SR_alpha_SRX"/>
    <property type="match status" value="1"/>
</dbReference>
<dbReference type="CDD" id="cd17876">
    <property type="entry name" value="SRalpha_C"/>
    <property type="match status" value="1"/>
</dbReference>
<dbReference type="FunFam" id="3.40.50.300:FF:000188">
    <property type="entry name" value="signal recognition particle receptor subunit alpha"/>
    <property type="match status" value="1"/>
</dbReference>
<dbReference type="FunFam" id="1.20.120.140:FF:000010">
    <property type="entry name" value="signal recognition particle receptor subunit alpha isoform X2"/>
    <property type="match status" value="1"/>
</dbReference>
<dbReference type="FunFam" id="3.30.450.60:FF:000021">
    <property type="entry name" value="signal recognition particle receptor subunit alpha isoform X2"/>
    <property type="match status" value="1"/>
</dbReference>
<dbReference type="Gene3D" id="3.30.450.60">
    <property type="match status" value="1"/>
</dbReference>
<dbReference type="Gene3D" id="3.40.50.300">
    <property type="entry name" value="P-loop containing nucleotide triphosphate hydrolases"/>
    <property type="match status" value="1"/>
</dbReference>
<dbReference type="Gene3D" id="1.20.120.140">
    <property type="entry name" value="Signal recognition particle SRP54, nucleotide-binding domain"/>
    <property type="match status" value="1"/>
</dbReference>
<dbReference type="InterPro" id="IPR003593">
    <property type="entry name" value="AAA+_ATPase"/>
</dbReference>
<dbReference type="InterPro" id="IPR011012">
    <property type="entry name" value="Longin-like_dom_sf"/>
</dbReference>
<dbReference type="InterPro" id="IPR027417">
    <property type="entry name" value="P-loop_NTPase"/>
</dbReference>
<dbReference type="InterPro" id="IPR007222">
    <property type="entry name" value="Sig_recog_particle_rcpt_asu_N"/>
</dbReference>
<dbReference type="InterPro" id="IPR013822">
    <property type="entry name" value="Signal_recog_particl_SRP54_hlx"/>
</dbReference>
<dbReference type="InterPro" id="IPR036225">
    <property type="entry name" value="SRP/SRP_N"/>
</dbReference>
<dbReference type="InterPro" id="IPR000897">
    <property type="entry name" value="SRP54_GTPase_dom"/>
</dbReference>
<dbReference type="InterPro" id="IPR042101">
    <property type="entry name" value="SRP54_N_sf"/>
</dbReference>
<dbReference type="PANTHER" id="PTHR43134">
    <property type="entry name" value="SIGNAL RECOGNITION PARTICLE RECEPTOR SUBUNIT ALPHA"/>
    <property type="match status" value="1"/>
</dbReference>
<dbReference type="PANTHER" id="PTHR43134:SF1">
    <property type="entry name" value="SIGNAL RECOGNITION PARTICLE RECEPTOR SUBUNIT ALPHA"/>
    <property type="match status" value="1"/>
</dbReference>
<dbReference type="Pfam" id="PF04086">
    <property type="entry name" value="SRP-alpha_N"/>
    <property type="match status" value="1"/>
</dbReference>
<dbReference type="Pfam" id="PF00448">
    <property type="entry name" value="SRP54"/>
    <property type="match status" value="1"/>
</dbReference>
<dbReference type="Pfam" id="PF02881">
    <property type="entry name" value="SRP54_N"/>
    <property type="match status" value="1"/>
</dbReference>
<dbReference type="SMART" id="SM00382">
    <property type="entry name" value="AAA"/>
    <property type="match status" value="1"/>
</dbReference>
<dbReference type="SMART" id="SM00962">
    <property type="entry name" value="SRP54"/>
    <property type="match status" value="1"/>
</dbReference>
<dbReference type="SMART" id="SM00963">
    <property type="entry name" value="SRP54_N"/>
    <property type="match status" value="1"/>
</dbReference>
<dbReference type="SUPFAM" id="SSF47364">
    <property type="entry name" value="Domain of the SRP/SRP receptor G-proteins"/>
    <property type="match status" value="1"/>
</dbReference>
<dbReference type="SUPFAM" id="SSF52540">
    <property type="entry name" value="P-loop containing nucleoside triphosphate hydrolases"/>
    <property type="match status" value="1"/>
</dbReference>
<dbReference type="SUPFAM" id="SSF64356">
    <property type="entry name" value="SNARE-like"/>
    <property type="match status" value="1"/>
</dbReference>
<dbReference type="PROSITE" id="PS00300">
    <property type="entry name" value="SRP54"/>
    <property type="match status" value="1"/>
</dbReference>